<comment type="function">
    <text evidence="2">Involved in base excision repair of DNA damaged by oxidation or by mutagenic agents. Acts as a DNA glycosylase that recognizes and removes damaged bases. Has a preference for oxidized purines, such as 7,8-dihydro-8-oxoguanine (8-oxoG). Has AP (apurinic/apyrimidinic) lyase activity and introduces nicks in the DNA strand. Cleaves the DNA backbone by beta-delta elimination to generate a single-strand break at the site of the removed base with both 3'- and 5'-phosphates.</text>
</comment>
<comment type="catalytic activity">
    <reaction evidence="2">
        <text>Hydrolysis of DNA containing ring-opened 7-methylguanine residues, releasing 2,6-diamino-4-hydroxy-5-(N-methyl)formamidopyrimidine.</text>
        <dbReference type="EC" id="3.2.2.23"/>
    </reaction>
</comment>
<comment type="catalytic activity">
    <reaction evidence="2">
        <text>2'-deoxyribonucleotide-(2'-deoxyribose 5'-phosphate)-2'-deoxyribonucleotide-DNA = a 3'-end 2'-deoxyribonucleotide-(2,3-dehydro-2,3-deoxyribose 5'-phosphate)-DNA + a 5'-end 5'-phospho-2'-deoxyribonucleoside-DNA + H(+)</text>
        <dbReference type="Rhea" id="RHEA:66592"/>
        <dbReference type="Rhea" id="RHEA-COMP:13180"/>
        <dbReference type="Rhea" id="RHEA-COMP:16897"/>
        <dbReference type="Rhea" id="RHEA-COMP:17067"/>
        <dbReference type="ChEBI" id="CHEBI:15378"/>
        <dbReference type="ChEBI" id="CHEBI:136412"/>
        <dbReference type="ChEBI" id="CHEBI:157695"/>
        <dbReference type="ChEBI" id="CHEBI:167181"/>
        <dbReference type="EC" id="4.2.99.18"/>
    </reaction>
</comment>
<comment type="cofactor">
    <cofactor evidence="2">
        <name>Zn(2+)</name>
        <dbReference type="ChEBI" id="CHEBI:29105"/>
    </cofactor>
    <text evidence="2">Binds 1 zinc ion per subunit.</text>
</comment>
<comment type="subunit">
    <text evidence="2">Monomer.</text>
</comment>
<comment type="similarity">
    <text evidence="2">Belongs to the FPG family.</text>
</comment>
<evidence type="ECO:0000250" key="1"/>
<evidence type="ECO:0000255" key="2">
    <source>
        <dbReference type="HAMAP-Rule" id="MF_00103"/>
    </source>
</evidence>
<proteinExistence type="inferred from homology"/>
<feature type="initiator methionine" description="Removed" evidence="1">
    <location>
        <position position="1"/>
    </location>
</feature>
<feature type="chain" id="PRO_1000071307" description="Formamidopyrimidine-DNA glycosylase">
    <location>
        <begin position="2"/>
        <end position="293"/>
    </location>
</feature>
<feature type="zinc finger region" description="FPG-type" evidence="2">
    <location>
        <begin position="257"/>
        <end position="293"/>
    </location>
</feature>
<feature type="active site" description="Schiff-base intermediate with DNA" evidence="2">
    <location>
        <position position="2"/>
    </location>
</feature>
<feature type="active site" description="Proton donor" evidence="2">
    <location>
        <position position="3"/>
    </location>
</feature>
<feature type="active site" description="Proton donor; for beta-elimination activity" evidence="2">
    <location>
        <position position="58"/>
    </location>
</feature>
<feature type="active site" description="Proton donor; for delta-elimination activity" evidence="2">
    <location>
        <position position="283"/>
    </location>
</feature>
<feature type="binding site" evidence="2">
    <location>
        <position position="104"/>
    </location>
    <ligand>
        <name>DNA</name>
        <dbReference type="ChEBI" id="CHEBI:16991"/>
    </ligand>
</feature>
<feature type="binding site" evidence="2">
    <location>
        <position position="123"/>
    </location>
    <ligand>
        <name>DNA</name>
        <dbReference type="ChEBI" id="CHEBI:16991"/>
    </ligand>
</feature>
<feature type="binding site" evidence="2">
    <location>
        <position position="166"/>
    </location>
    <ligand>
        <name>DNA</name>
        <dbReference type="ChEBI" id="CHEBI:16991"/>
    </ligand>
</feature>
<sequence>MPELPEVETVRRGLLPVLQGAVIESAEARRPDLRWPLPEGFAERLTGRRVEAVGRRAKYLLADLDGGEVLIVHLGMSGSIRIEGAQVKGRPAGFYHPRGEPGTHDHVVFHLAGGATVTFNDPRRFGAMLLVPYDQLDSHPLLSSLGPEPLGNTFHADYLAQACAGRRTNLKAALLDQKVVAGLGNIYVSEALHRAGLSPRRMASTLASASGAPNVRTERLVTAIRDVLREAIQAGGSSLKDHRQVNGELGYFQHNFKVYDREGEPCPTLRCKGHVQRIVQAGRSTFFCATCQR</sequence>
<dbReference type="EC" id="3.2.2.23" evidence="2"/>
<dbReference type="EC" id="4.2.99.18" evidence="2"/>
<dbReference type="EMBL" id="AP009384">
    <property type="protein sequence ID" value="BAF86798.1"/>
    <property type="molecule type" value="Genomic_DNA"/>
</dbReference>
<dbReference type="RefSeq" id="WP_012169331.1">
    <property type="nucleotide sequence ID" value="NC_009937.1"/>
</dbReference>
<dbReference type="SMR" id="A8IQM5"/>
<dbReference type="STRING" id="438753.AZC_0800"/>
<dbReference type="KEGG" id="azc:AZC_0800"/>
<dbReference type="eggNOG" id="COG0266">
    <property type="taxonomic scope" value="Bacteria"/>
</dbReference>
<dbReference type="HOGENOM" id="CLU_038423_1_1_5"/>
<dbReference type="Proteomes" id="UP000000270">
    <property type="component" value="Chromosome"/>
</dbReference>
<dbReference type="GO" id="GO:0034039">
    <property type="term" value="F:8-oxo-7,8-dihydroguanine DNA N-glycosylase activity"/>
    <property type="evidence" value="ECO:0007669"/>
    <property type="project" value="TreeGrafter"/>
</dbReference>
<dbReference type="GO" id="GO:0140078">
    <property type="term" value="F:class I DNA-(apurinic or apyrimidinic site) endonuclease activity"/>
    <property type="evidence" value="ECO:0007669"/>
    <property type="project" value="UniProtKB-EC"/>
</dbReference>
<dbReference type="GO" id="GO:0003684">
    <property type="term" value="F:damaged DNA binding"/>
    <property type="evidence" value="ECO:0007669"/>
    <property type="project" value="InterPro"/>
</dbReference>
<dbReference type="GO" id="GO:0008270">
    <property type="term" value="F:zinc ion binding"/>
    <property type="evidence" value="ECO:0007669"/>
    <property type="project" value="UniProtKB-UniRule"/>
</dbReference>
<dbReference type="GO" id="GO:0006284">
    <property type="term" value="P:base-excision repair"/>
    <property type="evidence" value="ECO:0007669"/>
    <property type="project" value="InterPro"/>
</dbReference>
<dbReference type="CDD" id="cd08966">
    <property type="entry name" value="EcFpg-like_N"/>
    <property type="match status" value="1"/>
</dbReference>
<dbReference type="FunFam" id="1.10.8.50:FF:000003">
    <property type="entry name" value="Formamidopyrimidine-DNA glycosylase"/>
    <property type="match status" value="1"/>
</dbReference>
<dbReference type="Gene3D" id="1.10.8.50">
    <property type="match status" value="1"/>
</dbReference>
<dbReference type="Gene3D" id="3.20.190.10">
    <property type="entry name" value="MutM-like, N-terminal"/>
    <property type="match status" value="1"/>
</dbReference>
<dbReference type="HAMAP" id="MF_00103">
    <property type="entry name" value="Fapy_DNA_glycosyl"/>
    <property type="match status" value="1"/>
</dbReference>
<dbReference type="InterPro" id="IPR015886">
    <property type="entry name" value="DNA_glyclase/AP_lyase_DNA-bd"/>
</dbReference>
<dbReference type="InterPro" id="IPR015887">
    <property type="entry name" value="DNA_glyclase_Znf_dom_DNA_BS"/>
</dbReference>
<dbReference type="InterPro" id="IPR020629">
    <property type="entry name" value="Formamido-pyr_DNA_Glyclase"/>
</dbReference>
<dbReference type="InterPro" id="IPR012319">
    <property type="entry name" value="FPG_cat"/>
</dbReference>
<dbReference type="InterPro" id="IPR035937">
    <property type="entry name" value="MutM-like_N-ter"/>
</dbReference>
<dbReference type="InterPro" id="IPR010979">
    <property type="entry name" value="Ribosomal_uS13-like_H2TH"/>
</dbReference>
<dbReference type="InterPro" id="IPR000214">
    <property type="entry name" value="Znf_DNA_glyclase/AP_lyase"/>
</dbReference>
<dbReference type="InterPro" id="IPR010663">
    <property type="entry name" value="Znf_FPG/IleRS"/>
</dbReference>
<dbReference type="NCBIfam" id="TIGR00577">
    <property type="entry name" value="fpg"/>
    <property type="match status" value="1"/>
</dbReference>
<dbReference type="NCBIfam" id="NF002211">
    <property type="entry name" value="PRK01103.1"/>
    <property type="match status" value="1"/>
</dbReference>
<dbReference type="PANTHER" id="PTHR22993">
    <property type="entry name" value="FORMAMIDOPYRIMIDINE-DNA GLYCOSYLASE"/>
    <property type="match status" value="1"/>
</dbReference>
<dbReference type="PANTHER" id="PTHR22993:SF9">
    <property type="entry name" value="FORMAMIDOPYRIMIDINE-DNA GLYCOSYLASE"/>
    <property type="match status" value="1"/>
</dbReference>
<dbReference type="Pfam" id="PF01149">
    <property type="entry name" value="Fapy_DNA_glyco"/>
    <property type="match status" value="1"/>
</dbReference>
<dbReference type="Pfam" id="PF06831">
    <property type="entry name" value="H2TH"/>
    <property type="match status" value="1"/>
</dbReference>
<dbReference type="Pfam" id="PF06827">
    <property type="entry name" value="zf-FPG_IleRS"/>
    <property type="match status" value="1"/>
</dbReference>
<dbReference type="SMART" id="SM00898">
    <property type="entry name" value="Fapy_DNA_glyco"/>
    <property type="match status" value="1"/>
</dbReference>
<dbReference type="SMART" id="SM01232">
    <property type="entry name" value="H2TH"/>
    <property type="match status" value="1"/>
</dbReference>
<dbReference type="SUPFAM" id="SSF57716">
    <property type="entry name" value="Glucocorticoid receptor-like (DNA-binding domain)"/>
    <property type="match status" value="1"/>
</dbReference>
<dbReference type="SUPFAM" id="SSF81624">
    <property type="entry name" value="N-terminal domain of MutM-like DNA repair proteins"/>
    <property type="match status" value="1"/>
</dbReference>
<dbReference type="SUPFAM" id="SSF46946">
    <property type="entry name" value="S13-like H2TH domain"/>
    <property type="match status" value="1"/>
</dbReference>
<dbReference type="PROSITE" id="PS51068">
    <property type="entry name" value="FPG_CAT"/>
    <property type="match status" value="1"/>
</dbReference>
<dbReference type="PROSITE" id="PS01242">
    <property type="entry name" value="ZF_FPG_1"/>
    <property type="match status" value="1"/>
</dbReference>
<dbReference type="PROSITE" id="PS51066">
    <property type="entry name" value="ZF_FPG_2"/>
    <property type="match status" value="1"/>
</dbReference>
<keyword id="KW-0227">DNA damage</keyword>
<keyword id="KW-0234">DNA repair</keyword>
<keyword id="KW-0238">DNA-binding</keyword>
<keyword id="KW-0326">Glycosidase</keyword>
<keyword id="KW-0378">Hydrolase</keyword>
<keyword id="KW-0456">Lyase</keyword>
<keyword id="KW-0479">Metal-binding</keyword>
<keyword id="KW-0511">Multifunctional enzyme</keyword>
<keyword id="KW-1185">Reference proteome</keyword>
<keyword id="KW-0862">Zinc</keyword>
<keyword id="KW-0863">Zinc-finger</keyword>
<reference key="1">
    <citation type="submission" date="2007-04" db="EMBL/GenBank/DDBJ databases">
        <title>Complete genome sequence of the nitrogen-fixing bacterium Azorhizobium caulinodans ORS571.</title>
        <authorList>
            <person name="Lee K.B."/>
            <person name="Backer P.D."/>
            <person name="Aono T."/>
            <person name="Liu C.T."/>
            <person name="Suzuki S."/>
            <person name="Suzuki T."/>
            <person name="Kaneko T."/>
            <person name="Yamada M."/>
            <person name="Tabata S."/>
            <person name="Kupfer D.M."/>
            <person name="Najar F.Z."/>
            <person name="Wiley G.B."/>
            <person name="Roe B."/>
            <person name="Binnewies T."/>
            <person name="Ussery D."/>
            <person name="Vereecke D."/>
            <person name="Gevers D."/>
            <person name="Holsters M."/>
            <person name="Oyaizu H."/>
        </authorList>
    </citation>
    <scope>NUCLEOTIDE SEQUENCE [LARGE SCALE GENOMIC DNA]</scope>
    <source>
        <strain>ATCC 43989 / DSM 5975 / JCM 20966 / LMG 6465 / NBRC 14845 / NCIMB 13405 / ORS 571</strain>
    </source>
</reference>
<accession>A8IQM5</accession>
<organism>
    <name type="scientific">Azorhizobium caulinodans (strain ATCC 43989 / DSM 5975 / JCM 20966 / LMG 6465 / NBRC 14845 / NCIMB 13405 / ORS 571)</name>
    <dbReference type="NCBI Taxonomy" id="438753"/>
    <lineage>
        <taxon>Bacteria</taxon>
        <taxon>Pseudomonadati</taxon>
        <taxon>Pseudomonadota</taxon>
        <taxon>Alphaproteobacteria</taxon>
        <taxon>Hyphomicrobiales</taxon>
        <taxon>Xanthobacteraceae</taxon>
        <taxon>Azorhizobium</taxon>
    </lineage>
</organism>
<protein>
    <recommendedName>
        <fullName evidence="2">Formamidopyrimidine-DNA glycosylase</fullName>
        <shortName evidence="2">Fapy-DNA glycosylase</shortName>
        <ecNumber evidence="2">3.2.2.23</ecNumber>
    </recommendedName>
    <alternativeName>
        <fullName evidence="2">DNA-(apurinic or apyrimidinic site) lyase MutM</fullName>
        <shortName evidence="2">AP lyase MutM</shortName>
        <ecNumber evidence="2">4.2.99.18</ecNumber>
    </alternativeName>
</protein>
<gene>
    <name evidence="2" type="primary">mutM</name>
    <name evidence="2" type="synonym">fpg</name>
    <name type="ordered locus">AZC_0800</name>
</gene>
<name>FPG_AZOC5</name>